<dbReference type="EC" id="6.3.4.2"/>
<dbReference type="EMBL" id="X53995">
    <property type="protein sequence ID" value="CAA37941.1"/>
    <property type="molecule type" value="Genomic_DNA"/>
</dbReference>
<dbReference type="EMBL" id="X78214">
    <property type="protein sequence ID" value="CAA55055.1"/>
    <property type="molecule type" value="Genomic_DNA"/>
</dbReference>
<dbReference type="EMBL" id="Z35800">
    <property type="protein sequence ID" value="CAA84859.1"/>
    <property type="molecule type" value="Genomic_DNA"/>
</dbReference>
<dbReference type="EMBL" id="BK006936">
    <property type="protein sequence ID" value="DAA07080.1"/>
    <property type="molecule type" value="Genomic_DNA"/>
</dbReference>
<dbReference type="PIR" id="S50291">
    <property type="entry name" value="S50291"/>
</dbReference>
<dbReference type="RefSeq" id="NP_009514.1">
    <property type="nucleotide sequence ID" value="NM_001178279.1"/>
</dbReference>
<dbReference type="PDB" id="7RMC">
    <property type="method" value="EM"/>
    <property type="resolution" value="3.50 A"/>
    <property type="chains" value="D/E/F/Q/R/S/T/U/V/W/g/h=1-572"/>
</dbReference>
<dbReference type="PDB" id="7RMV">
    <property type="method" value="EM"/>
    <property type="resolution" value="6.70 A"/>
    <property type="chains" value="A/B/C/D/E/F/G/H=1-572"/>
</dbReference>
<dbReference type="PDBsum" id="7RMC"/>
<dbReference type="PDBsum" id="7RMV"/>
<dbReference type="EMDB" id="EMD-24560"/>
<dbReference type="SMR" id="P28274"/>
<dbReference type="BioGRID" id="32658">
    <property type="interactions" value="309"/>
</dbReference>
<dbReference type="DIP" id="DIP-2954N"/>
<dbReference type="FunCoup" id="P28274">
    <property type="interactions" value="1101"/>
</dbReference>
<dbReference type="IntAct" id="P28274">
    <property type="interactions" value="108"/>
</dbReference>
<dbReference type="MINT" id="P28274"/>
<dbReference type="STRING" id="4932.YBL039C"/>
<dbReference type="MEROPS" id="C26.A36"/>
<dbReference type="iPTMnet" id="P28274"/>
<dbReference type="PaxDb" id="4932-YBL039C"/>
<dbReference type="PeptideAtlas" id="P28274"/>
<dbReference type="EnsemblFungi" id="YBL039C_mRNA">
    <property type="protein sequence ID" value="YBL039C"/>
    <property type="gene ID" value="YBL039C"/>
</dbReference>
<dbReference type="GeneID" id="852241"/>
<dbReference type="KEGG" id="sce:YBL039C"/>
<dbReference type="AGR" id="SGD:S000000135"/>
<dbReference type="SGD" id="S000000135">
    <property type="gene designation" value="URA7"/>
</dbReference>
<dbReference type="VEuPathDB" id="FungiDB:YBL039C"/>
<dbReference type="eggNOG" id="KOG2387">
    <property type="taxonomic scope" value="Eukaryota"/>
</dbReference>
<dbReference type="GeneTree" id="ENSGT00910000144179"/>
<dbReference type="HOGENOM" id="CLU_011675_5_0_1"/>
<dbReference type="InParanoid" id="P28274"/>
<dbReference type="OMA" id="EFNNAYR"/>
<dbReference type="OrthoDB" id="1739076at2759"/>
<dbReference type="BioCyc" id="YEAST:YBL039C-MONOMER"/>
<dbReference type="BRENDA" id="6.3.4.2">
    <property type="organism ID" value="984"/>
</dbReference>
<dbReference type="Reactome" id="R-SCE-499943">
    <property type="pathway name" value="Interconversion of nucleotide di- and triphosphates"/>
</dbReference>
<dbReference type="SABIO-RK" id="P28274"/>
<dbReference type="UniPathway" id="UPA00159">
    <property type="reaction ID" value="UER00277"/>
</dbReference>
<dbReference type="BioGRID-ORCS" id="852241">
    <property type="hits" value="9 hits in 10 CRISPR screens"/>
</dbReference>
<dbReference type="PRO" id="PR:P28274"/>
<dbReference type="Proteomes" id="UP000002311">
    <property type="component" value="Chromosome II"/>
</dbReference>
<dbReference type="RNAct" id="P28274">
    <property type="molecule type" value="protein"/>
</dbReference>
<dbReference type="GO" id="GO:0097268">
    <property type="term" value="C:cytoophidium"/>
    <property type="evidence" value="ECO:0000314"/>
    <property type="project" value="SGD"/>
</dbReference>
<dbReference type="GO" id="GO:0005737">
    <property type="term" value="C:cytoplasm"/>
    <property type="evidence" value="ECO:0007005"/>
    <property type="project" value="SGD"/>
</dbReference>
<dbReference type="GO" id="GO:0000324">
    <property type="term" value="C:fungal-type vacuole"/>
    <property type="evidence" value="ECO:0007005"/>
    <property type="project" value="SGD"/>
</dbReference>
<dbReference type="GO" id="GO:0005524">
    <property type="term" value="F:ATP binding"/>
    <property type="evidence" value="ECO:0007669"/>
    <property type="project" value="UniProtKB-KW"/>
</dbReference>
<dbReference type="GO" id="GO:0003883">
    <property type="term" value="F:CTP synthase activity"/>
    <property type="evidence" value="ECO:0000314"/>
    <property type="project" value="SGD"/>
</dbReference>
<dbReference type="GO" id="GO:0042802">
    <property type="term" value="F:identical protein binding"/>
    <property type="evidence" value="ECO:0000318"/>
    <property type="project" value="GO_Central"/>
</dbReference>
<dbReference type="GO" id="GO:0044210">
    <property type="term" value="P:'de novo' CTP biosynthetic process"/>
    <property type="evidence" value="ECO:0007669"/>
    <property type="project" value="UniProtKB-UniPathway"/>
</dbReference>
<dbReference type="GO" id="GO:0006241">
    <property type="term" value="P:CTP biosynthetic process"/>
    <property type="evidence" value="ECO:0000314"/>
    <property type="project" value="SGD"/>
</dbReference>
<dbReference type="GO" id="GO:0008654">
    <property type="term" value="P:phospholipid biosynthetic process"/>
    <property type="evidence" value="ECO:0000315"/>
    <property type="project" value="SGD"/>
</dbReference>
<dbReference type="GO" id="GO:0019856">
    <property type="term" value="P:pyrimidine nucleobase biosynthetic process"/>
    <property type="evidence" value="ECO:0000315"/>
    <property type="project" value="SGD"/>
</dbReference>
<dbReference type="CDD" id="cd03113">
    <property type="entry name" value="CTPS_N"/>
    <property type="match status" value="1"/>
</dbReference>
<dbReference type="CDD" id="cd01746">
    <property type="entry name" value="GATase1_CTP_Synthase"/>
    <property type="match status" value="1"/>
</dbReference>
<dbReference type="FunFam" id="3.40.50.300:FF:000207">
    <property type="entry name" value="CTP synthase"/>
    <property type="match status" value="1"/>
</dbReference>
<dbReference type="FunFam" id="3.40.50.880:FF:000005">
    <property type="entry name" value="CTP synthase"/>
    <property type="match status" value="1"/>
</dbReference>
<dbReference type="Gene3D" id="3.40.50.880">
    <property type="match status" value="1"/>
</dbReference>
<dbReference type="Gene3D" id="3.40.50.300">
    <property type="entry name" value="P-loop containing nucleotide triphosphate hydrolases"/>
    <property type="match status" value="1"/>
</dbReference>
<dbReference type="InterPro" id="IPR029062">
    <property type="entry name" value="Class_I_gatase-like"/>
</dbReference>
<dbReference type="InterPro" id="IPR004468">
    <property type="entry name" value="CTP_synthase"/>
</dbReference>
<dbReference type="InterPro" id="IPR017456">
    <property type="entry name" value="CTP_synthase_N"/>
</dbReference>
<dbReference type="InterPro" id="IPR017926">
    <property type="entry name" value="GATASE"/>
</dbReference>
<dbReference type="InterPro" id="IPR033828">
    <property type="entry name" value="GATase1_CTP_Synthase"/>
</dbReference>
<dbReference type="InterPro" id="IPR027417">
    <property type="entry name" value="P-loop_NTPase"/>
</dbReference>
<dbReference type="NCBIfam" id="NF003792">
    <property type="entry name" value="PRK05380.1"/>
    <property type="match status" value="1"/>
</dbReference>
<dbReference type="NCBIfam" id="TIGR00337">
    <property type="entry name" value="PyrG"/>
    <property type="match status" value="1"/>
</dbReference>
<dbReference type="PANTHER" id="PTHR11550">
    <property type="entry name" value="CTP SYNTHASE"/>
    <property type="match status" value="1"/>
</dbReference>
<dbReference type="PANTHER" id="PTHR11550:SF0">
    <property type="entry name" value="CTP SYNTHASE-RELATED"/>
    <property type="match status" value="1"/>
</dbReference>
<dbReference type="Pfam" id="PF06418">
    <property type="entry name" value="CTP_synth_N"/>
    <property type="match status" value="1"/>
</dbReference>
<dbReference type="Pfam" id="PF00117">
    <property type="entry name" value="GATase"/>
    <property type="match status" value="1"/>
</dbReference>
<dbReference type="SUPFAM" id="SSF52317">
    <property type="entry name" value="Class I glutamine amidotransferase-like"/>
    <property type="match status" value="1"/>
</dbReference>
<dbReference type="SUPFAM" id="SSF52540">
    <property type="entry name" value="P-loop containing nucleoside triphosphate hydrolases"/>
    <property type="match status" value="1"/>
</dbReference>
<dbReference type="PROSITE" id="PS51273">
    <property type="entry name" value="GATASE_TYPE_1"/>
    <property type="match status" value="1"/>
</dbReference>
<feature type="chain" id="PRO_0000138283" description="CTP synthase 1">
    <location>
        <begin position="1"/>
        <end position="579"/>
    </location>
</feature>
<feature type="domain" description="Glutamine amidotransferase type-1" evidence="1">
    <location>
        <begin position="305"/>
        <end position="559"/>
    </location>
</feature>
<feature type="active site" description="For GATase activity" evidence="1">
    <location>
        <position position="404"/>
    </location>
</feature>
<feature type="active site" description="For GATase activity" evidence="1">
    <location>
        <position position="535"/>
    </location>
</feature>
<feature type="active site" description="For GATase activity" evidence="1">
    <location>
        <position position="537"/>
    </location>
</feature>
<feature type="cross-link" description="Glycyl lysine isopeptide (Lys-Gly) (interchain with G-Cter in ubiquitin)" evidence="2">
    <location>
        <position position="422"/>
    </location>
</feature>
<feature type="sequence conflict" description="In Ref. 1; CAA37941." evidence="5" ref="1">
    <original>A</original>
    <variation>R</variation>
    <location>
        <position position="307"/>
    </location>
</feature>
<feature type="sequence conflict" description="In Ref. 1; CAA37941." evidence="5" ref="1">
    <original>V</original>
    <variation>S</variation>
    <location>
        <position position="418"/>
    </location>
</feature>
<accession>P28274</accession>
<accession>D6VPW0</accession>
<reference key="1">
    <citation type="journal article" date="1991" name="Mol. Gen. Genet.">
        <title>Cloning, sequencing and characterization of the Saccharomyces cerevisiae URA7 gene encoding CTP synthetase.</title>
        <authorList>
            <person name="Ozier-Kalogeropoulos O."/>
            <person name="Fasiolo F."/>
            <person name="Adeline M.-T."/>
            <person name="Collin J."/>
            <person name="Lacroute F."/>
        </authorList>
    </citation>
    <scope>NUCLEOTIDE SEQUENCE [GENOMIC DNA]</scope>
</reference>
<reference key="2">
    <citation type="submission" date="1993-12" db="EMBL/GenBank/DDBJ databases">
        <authorList>
            <person name="Ozier-Kalogeropoulos O."/>
        </authorList>
    </citation>
    <scope>SEQUENCE REVISION</scope>
</reference>
<reference key="3">
    <citation type="journal article" date="1994" name="Yeast">
        <title>The sequence of a 22.4 kb DNA fragment from the left arm of yeast chromosome II reveals homologues to bacterial proline synthetase and murine alpha-adaptin, as well as a new permease and a DNA-binding protein.</title>
        <authorList>
            <person name="de Wergifosse P."/>
            <person name="Jacques B."/>
            <person name="Jonniaux J.-L."/>
            <person name="Purnelle B."/>
            <person name="Skala J."/>
            <person name="Goffeau A."/>
        </authorList>
    </citation>
    <scope>NUCLEOTIDE SEQUENCE [GENOMIC DNA]</scope>
    <source>
        <strain>ATCC 204508 / S288c</strain>
    </source>
</reference>
<reference key="4">
    <citation type="journal article" date="1994" name="EMBO J.">
        <title>Complete DNA sequence of yeast chromosome II.</title>
        <authorList>
            <person name="Feldmann H."/>
            <person name="Aigle M."/>
            <person name="Aljinovic G."/>
            <person name="Andre B."/>
            <person name="Baclet M.C."/>
            <person name="Barthe C."/>
            <person name="Baur A."/>
            <person name="Becam A.-M."/>
            <person name="Biteau N."/>
            <person name="Boles E."/>
            <person name="Brandt T."/>
            <person name="Brendel M."/>
            <person name="Brueckner M."/>
            <person name="Bussereau F."/>
            <person name="Christiansen C."/>
            <person name="Contreras R."/>
            <person name="Crouzet M."/>
            <person name="Cziepluch C."/>
            <person name="Demolis N."/>
            <person name="Delaveau T."/>
            <person name="Doignon F."/>
            <person name="Domdey H."/>
            <person name="Duesterhus S."/>
            <person name="Dubois E."/>
            <person name="Dujon B."/>
            <person name="El Bakkoury M."/>
            <person name="Entian K.-D."/>
            <person name="Feuermann M."/>
            <person name="Fiers W."/>
            <person name="Fobo G.M."/>
            <person name="Fritz C."/>
            <person name="Gassenhuber J."/>
            <person name="Glansdorff N."/>
            <person name="Goffeau A."/>
            <person name="Grivell L.A."/>
            <person name="de Haan M."/>
            <person name="Hein C."/>
            <person name="Herbert C.J."/>
            <person name="Hollenberg C.P."/>
            <person name="Holmstroem K."/>
            <person name="Jacq C."/>
            <person name="Jacquet M."/>
            <person name="Jauniaux J.-C."/>
            <person name="Jonniaux J.-L."/>
            <person name="Kallesoee T."/>
            <person name="Kiesau P."/>
            <person name="Kirchrath L."/>
            <person name="Koetter P."/>
            <person name="Korol S."/>
            <person name="Liebl S."/>
            <person name="Logghe M."/>
            <person name="Lohan A.J.E."/>
            <person name="Louis E.J."/>
            <person name="Li Z.Y."/>
            <person name="Maat M.J."/>
            <person name="Mallet L."/>
            <person name="Mannhaupt G."/>
            <person name="Messenguy F."/>
            <person name="Miosga T."/>
            <person name="Molemans F."/>
            <person name="Mueller S."/>
            <person name="Nasr F."/>
            <person name="Obermaier B."/>
            <person name="Perea J."/>
            <person name="Pierard A."/>
            <person name="Piravandi E."/>
            <person name="Pohl F.M."/>
            <person name="Pohl T.M."/>
            <person name="Potier S."/>
            <person name="Proft M."/>
            <person name="Purnelle B."/>
            <person name="Ramezani Rad M."/>
            <person name="Rieger M."/>
            <person name="Rose M."/>
            <person name="Schaaff-Gerstenschlaeger I."/>
            <person name="Scherens B."/>
            <person name="Schwarzlose C."/>
            <person name="Skala J."/>
            <person name="Slonimski P.P."/>
            <person name="Smits P.H.M."/>
            <person name="Souciet J.-L."/>
            <person name="Steensma H.Y."/>
            <person name="Stucka R."/>
            <person name="Urrestarazu L.A."/>
            <person name="van der Aart Q.J.M."/>
            <person name="Van Dyck L."/>
            <person name="Vassarotti A."/>
            <person name="Vetter I."/>
            <person name="Vierendeels F."/>
            <person name="Vissers S."/>
            <person name="Wagner G."/>
            <person name="de Wergifosse P."/>
            <person name="Wolfe K.H."/>
            <person name="Zagulski M."/>
            <person name="Zimmermann F.K."/>
            <person name="Mewes H.-W."/>
            <person name="Kleine K."/>
        </authorList>
    </citation>
    <scope>NUCLEOTIDE SEQUENCE [LARGE SCALE GENOMIC DNA]</scope>
    <source>
        <strain>ATCC 204508 / S288c</strain>
    </source>
</reference>
<reference key="5">
    <citation type="journal article" date="2014" name="G3 (Bethesda)">
        <title>The reference genome sequence of Saccharomyces cerevisiae: Then and now.</title>
        <authorList>
            <person name="Engel S.R."/>
            <person name="Dietrich F.S."/>
            <person name="Fisk D.G."/>
            <person name="Binkley G."/>
            <person name="Balakrishnan R."/>
            <person name="Costanzo M.C."/>
            <person name="Dwight S.S."/>
            <person name="Hitz B.C."/>
            <person name="Karra K."/>
            <person name="Nash R.S."/>
            <person name="Weng S."/>
            <person name="Wong E.D."/>
            <person name="Lloyd P."/>
            <person name="Skrzypek M.S."/>
            <person name="Miyasato S.R."/>
            <person name="Simison M."/>
            <person name="Cherry J.M."/>
        </authorList>
    </citation>
    <scope>GENOME REANNOTATION</scope>
    <source>
        <strain>ATCC 204508 / S288c</strain>
    </source>
</reference>
<reference key="6">
    <citation type="journal article" date="1994" name="Biochemistry">
        <title>Purification and characterization of CTP synthetase, the product of the URA7 gene in Saccharomyces cerevisiae.</title>
        <authorList>
            <person name="Yang W.-L."/>
            <person name="McDonough V.M."/>
            <person name="Ozier-Kalogeropoulos O."/>
            <person name="Adeline M.-T."/>
            <person name="Flocco M.T."/>
            <person name="Carman G.M."/>
        </authorList>
    </citation>
    <scope>PROTEIN SEQUENCE OF 1-13</scope>
    <scope>BIOPHYSICOCHEMICAL PROPERTIES</scope>
    <scope>SUBUNIT</scope>
    <scope>ACTIVITY REGULATION</scope>
</reference>
<reference key="7">
    <citation type="journal article" date="2003" name="Nature">
        <title>Global analysis of protein expression in yeast.</title>
        <authorList>
            <person name="Ghaemmaghami S."/>
            <person name="Huh W.-K."/>
            <person name="Bower K."/>
            <person name="Howson R.W."/>
            <person name="Belle A."/>
            <person name="Dephoure N."/>
            <person name="O'Shea E.K."/>
            <person name="Weissman J.S."/>
        </authorList>
    </citation>
    <scope>LEVEL OF PROTEIN EXPRESSION [LARGE SCALE ANALYSIS]</scope>
</reference>
<reference key="8">
    <citation type="journal article" date="2003" name="Nat. Biotechnol.">
        <title>A proteomics approach to understanding protein ubiquitination.</title>
        <authorList>
            <person name="Peng J."/>
            <person name="Schwartz D."/>
            <person name="Elias J.E."/>
            <person name="Thoreen C.C."/>
            <person name="Cheng D."/>
            <person name="Marsischky G."/>
            <person name="Roelofs J."/>
            <person name="Finley D."/>
            <person name="Gygi S.P."/>
        </authorList>
    </citation>
    <scope>UBIQUITINATION [LARGE SCALE ANALYSIS] AT LYS-422</scope>
    <scope>IDENTIFICATION BY MASS SPECTROMETRY</scope>
    <source>
        <strain>SUB592</strain>
    </source>
</reference>
<reference key="9">
    <citation type="journal article" date="2009" name="Science">
        <title>Global analysis of Cdk1 substrate phosphorylation sites provides insights into evolution.</title>
        <authorList>
            <person name="Holt L.J."/>
            <person name="Tuch B.B."/>
            <person name="Villen J."/>
            <person name="Johnson A.D."/>
            <person name="Gygi S.P."/>
            <person name="Morgan D.O."/>
        </authorList>
    </citation>
    <scope>IDENTIFICATION BY MASS SPECTROMETRY [LARGE SCALE ANALYSIS]</scope>
</reference>
<proteinExistence type="evidence at protein level"/>
<protein>
    <recommendedName>
        <fullName>CTP synthase 1</fullName>
        <ecNumber>6.3.4.2</ecNumber>
    </recommendedName>
    <alternativeName>
        <fullName>CTP synthetase 1</fullName>
    </alternativeName>
    <alternativeName>
        <fullName>UTP--ammonia ligase 1</fullName>
    </alternativeName>
</protein>
<evidence type="ECO:0000255" key="1">
    <source>
        <dbReference type="PROSITE-ProRule" id="PRU00605"/>
    </source>
</evidence>
<evidence type="ECO:0000269" key="2">
    <source>
    </source>
</evidence>
<evidence type="ECO:0000269" key="3">
    <source>
    </source>
</evidence>
<evidence type="ECO:0000269" key="4">
    <source>
    </source>
</evidence>
<evidence type="ECO:0000305" key="5"/>
<comment type="function">
    <text>Catalyzes the ATP-dependent amination of UTP to CTP with either L-glutamine or ammonia as the source of nitrogen.</text>
</comment>
<comment type="catalytic activity">
    <reaction>
        <text>UTP + L-glutamine + ATP + H2O = CTP + L-glutamate + ADP + phosphate + 2 H(+)</text>
        <dbReference type="Rhea" id="RHEA:26426"/>
        <dbReference type="ChEBI" id="CHEBI:15377"/>
        <dbReference type="ChEBI" id="CHEBI:15378"/>
        <dbReference type="ChEBI" id="CHEBI:29985"/>
        <dbReference type="ChEBI" id="CHEBI:30616"/>
        <dbReference type="ChEBI" id="CHEBI:37563"/>
        <dbReference type="ChEBI" id="CHEBI:43474"/>
        <dbReference type="ChEBI" id="CHEBI:46398"/>
        <dbReference type="ChEBI" id="CHEBI:58359"/>
        <dbReference type="ChEBI" id="CHEBI:456216"/>
        <dbReference type="EC" id="6.3.4.2"/>
    </reaction>
</comment>
<comment type="activity regulation">
    <text evidence="4">Activated by GTP and inhibited by CTP.</text>
</comment>
<comment type="biophysicochemical properties">
    <kinetics>
        <KM evidence="4">60 uM for UTP</KM>
        <KM evidence="4">0.9 mM for ATP</KM>
        <KM evidence="4">0.4 mM for L-glutamine</KM>
    </kinetics>
    <phDependence>
        <text evidence="4">Optimum pH is 8.0.</text>
    </phDependence>
</comment>
<comment type="pathway">
    <text>Pyrimidine metabolism; CTP biosynthesis via de novo pathway; CTP from UDP: step 2/2.</text>
</comment>
<comment type="subunit">
    <text evidence="4">Homodimer. Oligomerizes to a tetramer in the presence of its substrates UTP and ATP.</text>
</comment>
<comment type="miscellaneous">
    <text evidence="3">Present with 57600 molecules/cell in log phase SD medium.</text>
</comment>
<comment type="similarity">
    <text evidence="5">Belongs to the CTP synthase family.</text>
</comment>
<name>URA7_YEAST</name>
<gene>
    <name type="primary">URA7</name>
    <name type="ordered locus">YBL039C</name>
    <name type="ORF">YBL0410</name>
</gene>
<sequence>MKYVVVSGGVISGIGKGVLASSTGMLMKTLGLKVTSIKIDPYMNIDAGTMSPLEHGECFVLDDGGETDLDLGNYERYLGVTLTKDHNITTGKIYSHVIAKERKGDYLGKTVQIVPHLTNAIQDWIERVAKIPVDDTGMEPDVCIIELGGTVGDIESAPFVEALRQFQFKVGKENFALIHVSLVPVIHGEQKTKPTQAAIKGLRSLGLVPDMIACRCSETLDKPTIDKIAMFCHVGPEQVVNVHDVNSTYHVPLLLLEQKMIDYLHARLKLDEISLTEEEKQRGLELLSKWKATTGNFDESMETVKIALVGKYTNLKDSYLSVIKALEHSSMKCRRKLDIKWVEATDLEPEAQESNKTKFHEAWNMVSTADGILIPGGFGVRGTEGMVLAARWARENHIPFLGVCLGLQIATIEFTRSVLGRKDSHSAEFYPDIDEKNHVVVFMPEIDKETMGGSMRLGLRPTFFQNETEWSQIKKLYGDVSEVHERHRHRYEINPKMVDELENNGLIFVGKDDTGKRCEILELKNHPYYIATQYHPEYTSKVLDPSKPFLGLVAASAGILQDVIEGKYDLEAGENKFNF</sequence>
<keyword id="KW-0002">3D-structure</keyword>
<keyword id="KW-0067">ATP-binding</keyword>
<keyword id="KW-0903">Direct protein sequencing</keyword>
<keyword id="KW-0315">Glutamine amidotransferase</keyword>
<keyword id="KW-1017">Isopeptide bond</keyword>
<keyword id="KW-0436">Ligase</keyword>
<keyword id="KW-0547">Nucleotide-binding</keyword>
<keyword id="KW-0665">Pyrimidine biosynthesis</keyword>
<keyword id="KW-1185">Reference proteome</keyword>
<keyword id="KW-0832">Ubl conjugation</keyword>
<organism>
    <name type="scientific">Saccharomyces cerevisiae (strain ATCC 204508 / S288c)</name>
    <name type="common">Baker's yeast</name>
    <dbReference type="NCBI Taxonomy" id="559292"/>
    <lineage>
        <taxon>Eukaryota</taxon>
        <taxon>Fungi</taxon>
        <taxon>Dikarya</taxon>
        <taxon>Ascomycota</taxon>
        <taxon>Saccharomycotina</taxon>
        <taxon>Saccharomycetes</taxon>
        <taxon>Saccharomycetales</taxon>
        <taxon>Saccharomycetaceae</taxon>
        <taxon>Saccharomyces</taxon>
    </lineage>
</organism>